<name>THYX_CORA7</name>
<feature type="chain" id="PRO_1000184587" description="Flavin-dependent thymidylate synthase">
    <location>
        <begin position="1"/>
        <end position="249"/>
    </location>
</feature>
<feature type="domain" description="ThyX" evidence="2">
    <location>
        <begin position="7"/>
        <end position="235"/>
    </location>
</feature>
<feature type="short sequence motif" description="ThyX motif" evidence="1">
    <location>
        <begin position="97"/>
        <end position="107"/>
    </location>
</feature>
<feature type="active site" description="Involved in ionization of N3 of dUMP, leading to its activation" evidence="1">
    <location>
        <position position="201"/>
    </location>
</feature>
<feature type="binding site" evidence="1">
    <location>
        <begin position="94"/>
        <end position="97"/>
    </location>
    <ligand>
        <name>dUMP</name>
        <dbReference type="ChEBI" id="CHEBI:246422"/>
        <note>ligand shared between dimeric partners</note>
    </ligand>
</feature>
<feature type="binding site" evidence="1">
    <location>
        <begin position="97"/>
        <end position="99"/>
    </location>
    <ligand>
        <name>FAD</name>
        <dbReference type="ChEBI" id="CHEBI:57692"/>
        <note>ligand shared between neighboring subunits</note>
    </ligand>
</feature>
<feature type="binding site" description="in other chain" evidence="1">
    <location>
        <begin position="105"/>
        <end position="109"/>
    </location>
    <ligand>
        <name>dUMP</name>
        <dbReference type="ChEBI" id="CHEBI:246422"/>
        <note>ligand shared between dimeric partners</note>
    </ligand>
</feature>
<feature type="binding site" evidence="1">
    <location>
        <position position="105"/>
    </location>
    <ligand>
        <name>FAD</name>
        <dbReference type="ChEBI" id="CHEBI:57692"/>
        <note>ligand shared between neighboring subunits</note>
    </ligand>
</feature>
<feature type="binding site" description="in other chain" evidence="1">
    <location>
        <position position="174"/>
    </location>
    <ligand>
        <name>dUMP</name>
        <dbReference type="ChEBI" id="CHEBI:246422"/>
        <note>ligand shared between dimeric partners</note>
    </ligand>
</feature>
<feature type="binding site" evidence="1">
    <location>
        <begin position="190"/>
        <end position="192"/>
    </location>
    <ligand>
        <name>FAD</name>
        <dbReference type="ChEBI" id="CHEBI:57692"/>
        <note>ligand shared between neighboring subunits</note>
    </ligand>
</feature>
<feature type="binding site" evidence="1">
    <location>
        <position position="196"/>
    </location>
    <ligand>
        <name>FAD</name>
        <dbReference type="ChEBI" id="CHEBI:57692"/>
        <note>ligand shared between neighboring subunits</note>
    </ligand>
</feature>
<feature type="binding site" evidence="1">
    <location>
        <position position="201"/>
    </location>
    <ligand>
        <name>dUMP</name>
        <dbReference type="ChEBI" id="CHEBI:246422"/>
        <note>ligand shared between dimeric partners</note>
    </ligand>
</feature>
<proteinExistence type="inferred from homology"/>
<comment type="function">
    <text evidence="1">Catalyzes the reductive methylation of 2'-deoxyuridine-5'-monophosphate (dUMP) to 2'-deoxythymidine-5'-monophosphate (dTMP) while utilizing 5,10-methylenetetrahydrofolate (mTHF) as the methyl donor, and NADPH and FADH(2) as the reductant.</text>
</comment>
<comment type="catalytic activity">
    <reaction evidence="1">
        <text>dUMP + (6R)-5,10-methylene-5,6,7,8-tetrahydrofolate + NADPH + H(+) = dTMP + (6S)-5,6,7,8-tetrahydrofolate + NADP(+)</text>
        <dbReference type="Rhea" id="RHEA:29043"/>
        <dbReference type="ChEBI" id="CHEBI:15378"/>
        <dbReference type="ChEBI" id="CHEBI:15636"/>
        <dbReference type="ChEBI" id="CHEBI:57453"/>
        <dbReference type="ChEBI" id="CHEBI:57783"/>
        <dbReference type="ChEBI" id="CHEBI:58349"/>
        <dbReference type="ChEBI" id="CHEBI:63528"/>
        <dbReference type="ChEBI" id="CHEBI:246422"/>
        <dbReference type="EC" id="2.1.1.148"/>
    </reaction>
</comment>
<comment type="cofactor">
    <cofactor evidence="1">
        <name>FAD</name>
        <dbReference type="ChEBI" id="CHEBI:57692"/>
    </cofactor>
    <text evidence="1">Binds 4 FAD per tetramer. Each FAD binding site is formed by three monomers.</text>
</comment>
<comment type="pathway">
    <text evidence="1">Pyrimidine metabolism; dTTP biosynthesis.</text>
</comment>
<comment type="subunit">
    <text evidence="1">Homotetramer.</text>
</comment>
<comment type="similarity">
    <text evidence="1">Belongs to the thymidylate synthase ThyX family.</text>
</comment>
<organism>
    <name type="scientific">Corynebacterium aurimucosum (strain ATCC 700975 / DSM 44827 / CIP 107346 / CN-1)</name>
    <name type="common">Corynebacterium nigricans</name>
    <dbReference type="NCBI Taxonomy" id="548476"/>
    <lineage>
        <taxon>Bacteria</taxon>
        <taxon>Bacillati</taxon>
        <taxon>Actinomycetota</taxon>
        <taxon>Actinomycetes</taxon>
        <taxon>Mycobacteriales</taxon>
        <taxon>Corynebacteriaceae</taxon>
        <taxon>Corynebacterium</taxon>
    </lineage>
</organism>
<evidence type="ECO:0000255" key="1">
    <source>
        <dbReference type="HAMAP-Rule" id="MF_01408"/>
    </source>
</evidence>
<evidence type="ECO:0000255" key="2">
    <source>
        <dbReference type="PROSITE-ProRule" id="PRU00661"/>
    </source>
</evidence>
<dbReference type="EC" id="2.1.1.148" evidence="1"/>
<dbReference type="EMBL" id="CP001601">
    <property type="protein sequence ID" value="ACP33109.1"/>
    <property type="molecule type" value="Genomic_DNA"/>
</dbReference>
<dbReference type="RefSeq" id="WP_010190306.1">
    <property type="nucleotide sequence ID" value="NC_012590.1"/>
</dbReference>
<dbReference type="SMR" id="C3PH05"/>
<dbReference type="STRING" id="548476.cauri_1516"/>
<dbReference type="GeneID" id="31924145"/>
<dbReference type="KEGG" id="car:cauri_1516"/>
<dbReference type="eggNOG" id="COG1351">
    <property type="taxonomic scope" value="Bacteria"/>
</dbReference>
<dbReference type="HOGENOM" id="CLU_077585_1_0_11"/>
<dbReference type="OrthoDB" id="9780625at2"/>
<dbReference type="UniPathway" id="UPA00575"/>
<dbReference type="Proteomes" id="UP000002077">
    <property type="component" value="Chromosome"/>
</dbReference>
<dbReference type="GO" id="GO:0050660">
    <property type="term" value="F:flavin adenine dinucleotide binding"/>
    <property type="evidence" value="ECO:0007669"/>
    <property type="project" value="InterPro"/>
</dbReference>
<dbReference type="GO" id="GO:0070402">
    <property type="term" value="F:NADPH binding"/>
    <property type="evidence" value="ECO:0007669"/>
    <property type="project" value="TreeGrafter"/>
</dbReference>
<dbReference type="GO" id="GO:0050797">
    <property type="term" value="F:thymidylate synthase (FAD) activity"/>
    <property type="evidence" value="ECO:0007669"/>
    <property type="project" value="UniProtKB-UniRule"/>
</dbReference>
<dbReference type="GO" id="GO:0004799">
    <property type="term" value="F:thymidylate synthase activity"/>
    <property type="evidence" value="ECO:0007669"/>
    <property type="project" value="TreeGrafter"/>
</dbReference>
<dbReference type="GO" id="GO:0006231">
    <property type="term" value="P:dTMP biosynthetic process"/>
    <property type="evidence" value="ECO:0007669"/>
    <property type="project" value="UniProtKB-UniRule"/>
</dbReference>
<dbReference type="GO" id="GO:0006235">
    <property type="term" value="P:dTTP biosynthetic process"/>
    <property type="evidence" value="ECO:0007669"/>
    <property type="project" value="UniProtKB-UniRule"/>
</dbReference>
<dbReference type="GO" id="GO:0032259">
    <property type="term" value="P:methylation"/>
    <property type="evidence" value="ECO:0007669"/>
    <property type="project" value="UniProtKB-KW"/>
</dbReference>
<dbReference type="CDD" id="cd20175">
    <property type="entry name" value="ThyX"/>
    <property type="match status" value="1"/>
</dbReference>
<dbReference type="Gene3D" id="3.30.1360.170">
    <property type="match status" value="1"/>
</dbReference>
<dbReference type="HAMAP" id="MF_01408">
    <property type="entry name" value="ThyX"/>
    <property type="match status" value="1"/>
</dbReference>
<dbReference type="InterPro" id="IPR003669">
    <property type="entry name" value="Thymidylate_synthase_ThyX"/>
</dbReference>
<dbReference type="InterPro" id="IPR036098">
    <property type="entry name" value="Thymidylate_synthase_ThyX_sf"/>
</dbReference>
<dbReference type="NCBIfam" id="TIGR02170">
    <property type="entry name" value="thyX"/>
    <property type="match status" value="1"/>
</dbReference>
<dbReference type="PANTHER" id="PTHR34934">
    <property type="entry name" value="FLAVIN-DEPENDENT THYMIDYLATE SYNTHASE"/>
    <property type="match status" value="1"/>
</dbReference>
<dbReference type="PANTHER" id="PTHR34934:SF1">
    <property type="entry name" value="FLAVIN-DEPENDENT THYMIDYLATE SYNTHASE"/>
    <property type="match status" value="1"/>
</dbReference>
<dbReference type="Pfam" id="PF02511">
    <property type="entry name" value="Thy1"/>
    <property type="match status" value="1"/>
</dbReference>
<dbReference type="SUPFAM" id="SSF69796">
    <property type="entry name" value="Thymidylate synthase-complementing protein Thy1"/>
    <property type="match status" value="1"/>
</dbReference>
<dbReference type="PROSITE" id="PS51331">
    <property type="entry name" value="THYX"/>
    <property type="match status" value="1"/>
</dbReference>
<sequence>MAKVSELDVQLIAATAFHAPQGVDWEVDEGASESEALVEFAGRACYESFDKPNPRTASNQAYLHHILEVGHDALLEHATATLYIRGLSRSASHELVRHRHFSFSQLSQRFVHSEEAEVVLPKFIAEDEQLTRLTLQAADEARFVYEELLDALESKLEEEPNALLRKKQARQAARAVLPNLTESRIVVTGNYRAWRHFIGARATEQADTEMRQLAVTCLKLLREQSPVLFDDFHITTLADGTEMASSPYA</sequence>
<gene>
    <name evidence="1" type="primary">thyX</name>
    <name type="ordered locus">cauri_1516</name>
</gene>
<accession>C3PH05</accession>
<reference key="1">
    <citation type="journal article" date="2010" name="BMC Genomics">
        <title>Complete genome sequence and lifestyle of black-pigmented Corynebacterium aurimucosum ATCC 700975 (formerly C. nigricans CN-1) isolated from a vaginal swab of a woman with spontaneous abortion.</title>
        <authorList>
            <person name="Trost E."/>
            <person name="Gotker S."/>
            <person name="Schneider J."/>
            <person name="Schneiker-Bekel S."/>
            <person name="Szczepanowski R."/>
            <person name="Tilker A."/>
            <person name="Viehoever P."/>
            <person name="Arnold W."/>
            <person name="Bekel T."/>
            <person name="Blom J."/>
            <person name="Gartemann K.H."/>
            <person name="Linke B."/>
            <person name="Goesmann A."/>
            <person name="Puhler A."/>
            <person name="Shukla S.K."/>
            <person name="Tauch A."/>
        </authorList>
    </citation>
    <scope>NUCLEOTIDE SEQUENCE [LARGE SCALE GENOMIC DNA]</scope>
    <source>
        <strain>ATCC 700975 / DSM 44827 / CIP 107346 / CN-1</strain>
    </source>
</reference>
<keyword id="KW-0274">FAD</keyword>
<keyword id="KW-0285">Flavoprotein</keyword>
<keyword id="KW-0489">Methyltransferase</keyword>
<keyword id="KW-0521">NADP</keyword>
<keyword id="KW-0545">Nucleotide biosynthesis</keyword>
<keyword id="KW-1185">Reference proteome</keyword>
<keyword id="KW-0808">Transferase</keyword>
<protein>
    <recommendedName>
        <fullName evidence="1">Flavin-dependent thymidylate synthase</fullName>
        <shortName evidence="1">FDTS</shortName>
        <ecNumber evidence="1">2.1.1.148</ecNumber>
    </recommendedName>
    <alternativeName>
        <fullName evidence="1">FAD-dependent thymidylate synthase</fullName>
    </alternativeName>
    <alternativeName>
        <fullName evidence="1">Thymidylate synthase ThyX</fullName>
        <shortName evidence="1">TS</shortName>
        <shortName evidence="1">TSase</shortName>
    </alternativeName>
</protein>